<protein>
    <recommendedName>
        <fullName>Putative KilA-N domain-containing protein 006L</fullName>
    </recommendedName>
</protein>
<name>006L_IIV6</name>
<accession>Q91G88</accession>
<comment type="similarity">
    <text evidence="3">Belongs to the IIV-6 006L/238R/313L/468L family.</text>
</comment>
<organismHost>
    <name type="scientific">Acheta domesticus</name>
    <name type="common">House cricket</name>
    <dbReference type="NCBI Taxonomy" id="6997"/>
</organismHost>
<organismHost>
    <name type="scientific">Chilo suppressalis</name>
    <name type="common">Asiatic rice borer moth</name>
    <dbReference type="NCBI Taxonomy" id="168631"/>
</organismHost>
<organismHost>
    <name type="scientific">Gryllus bimaculatus</name>
    <name type="common">Two-spotted cricket</name>
    <dbReference type="NCBI Taxonomy" id="6999"/>
</organismHost>
<organismHost>
    <name type="scientific">Gryllus campestris</name>
    <dbReference type="NCBI Taxonomy" id="58607"/>
</organismHost>
<organismHost>
    <name type="scientific">Spodoptera frugiperda</name>
    <name type="common">Fall armyworm</name>
    <dbReference type="NCBI Taxonomy" id="7108"/>
</organismHost>
<sequence>MDSLNEVCYEQIKGTFYKGLFGDFPLIVDKKTGCFNATKLCVLGGKRFVDWNKTLRSKKLIQYYETRCDIKTESLLYEIKGDNNDEITKQITGTYLPKEFILDIASWISVEFYDKCNNIIINYFVNEYKTMDKKTLQSKINEVEEKMQKLLNEKEEELQEKNDKIDELILFSKRMEEDRKKDREMMIKQEKMLRELGIHLEDVSSQNNELIEKVDEQVEQNAVLNFKIDNIQNKLEIAVEDRAPQPKQNLKRERFILLKRNDDYYPYYTIRAQDINARSALKRQKNLYNEVSVLLDLTCHPNSKTLYVRVKDELKQKGVVFNLCKVSISNSKINEEELIKAMETINDEKRDV</sequence>
<dbReference type="EMBL" id="AF303741">
    <property type="protein sequence ID" value="AAK81943.1"/>
    <property type="molecule type" value="Genomic_DNA"/>
</dbReference>
<dbReference type="RefSeq" id="NP_149469.1">
    <property type="nucleotide sequence ID" value="NC_003038.1"/>
</dbReference>
<dbReference type="SMR" id="Q91G88"/>
<dbReference type="KEGG" id="vg:1733056"/>
<dbReference type="OrthoDB" id="8312at10239"/>
<dbReference type="Proteomes" id="UP000001359">
    <property type="component" value="Genome"/>
</dbReference>
<dbReference type="InterPro" id="IPR022549">
    <property type="entry name" value="DUF3627"/>
</dbReference>
<dbReference type="InterPro" id="IPR018004">
    <property type="entry name" value="KilA/APSES_HTH"/>
</dbReference>
<dbReference type="InterPro" id="IPR017880">
    <property type="entry name" value="KilA_N"/>
</dbReference>
<dbReference type="Pfam" id="PF12299">
    <property type="entry name" value="DUF3627"/>
    <property type="match status" value="1"/>
</dbReference>
<dbReference type="Pfam" id="PF04383">
    <property type="entry name" value="KilA-N"/>
    <property type="match status" value="1"/>
</dbReference>
<dbReference type="PROSITE" id="PS51301">
    <property type="entry name" value="KILA_N"/>
    <property type="match status" value="1"/>
</dbReference>
<gene>
    <name type="ORF">IIV6-006L</name>
</gene>
<feature type="chain" id="PRO_0000377958" description="Putative KilA-N domain-containing protein 006L">
    <location>
        <begin position="1"/>
        <end position="352"/>
    </location>
</feature>
<feature type="domain" description="KilA-N" evidence="2">
    <location>
        <begin position="15"/>
        <end position="123"/>
    </location>
</feature>
<feature type="coiled-coil region" evidence="1">
    <location>
        <begin position="129"/>
        <end position="236"/>
    </location>
</feature>
<proteinExistence type="inferred from homology"/>
<organism>
    <name type="scientific">Invertebrate iridescent virus 6</name>
    <name type="common">IIV-6</name>
    <name type="synonym">Chilo iridescent virus</name>
    <dbReference type="NCBI Taxonomy" id="176652"/>
    <lineage>
        <taxon>Viruses</taxon>
        <taxon>Varidnaviria</taxon>
        <taxon>Bamfordvirae</taxon>
        <taxon>Nucleocytoviricota</taxon>
        <taxon>Megaviricetes</taxon>
        <taxon>Pimascovirales</taxon>
        <taxon>Iridoviridae</taxon>
        <taxon>Betairidovirinae</taxon>
        <taxon>Iridovirus</taxon>
    </lineage>
</organism>
<keyword id="KW-0175">Coiled coil</keyword>
<keyword id="KW-1185">Reference proteome</keyword>
<evidence type="ECO:0000255" key="1"/>
<evidence type="ECO:0000255" key="2">
    <source>
        <dbReference type="PROSITE-ProRule" id="PRU00631"/>
    </source>
</evidence>
<evidence type="ECO:0000305" key="3"/>
<reference key="1">
    <citation type="journal article" date="2001" name="Virology">
        <title>Analysis of the first complete DNA sequence of an invertebrate iridovirus: coding strategy of the genome of Chilo iridescent virus.</title>
        <authorList>
            <person name="Jakob N.J."/>
            <person name="Mueller K."/>
            <person name="Bahr U."/>
            <person name="Darai G."/>
        </authorList>
    </citation>
    <scope>NUCLEOTIDE SEQUENCE [LARGE SCALE GENOMIC DNA]</scope>
</reference>
<reference key="2">
    <citation type="journal article" date="2007" name="Virol. J.">
        <title>Comparative genomic analysis of the family Iridoviridae: re-annotating and defining the core set of iridovirus genes.</title>
        <authorList>
            <person name="Eaton H.E."/>
            <person name="Metcalf J."/>
            <person name="Penny E."/>
            <person name="Tcherepanov V."/>
            <person name="Upton C."/>
            <person name="Brunetti C.R."/>
        </authorList>
    </citation>
    <scope>GENOME REANNOTATION</scope>
</reference>